<sequence>MSEYLFTSESVSEGHPDKVADQISDSILDAILEQDPTARVAAETLTNTGLVVLAGEITTTANVDYIKIARDTIKRIGYDNADYGIDYKSCAVLVAYDKQSPDIAQGVNNANDDPLDQGAGDQGLMFGYACDETPQLLPLPIWLSHRMVERQSQLRKDGRLPWLRPDAKSQVTIQYMDGKPHKIDTVLISTQHAPDISLDQVRESVIEEIIKPTLPQELIKGDIKFLVNPTGRFVIGGPQGDCGLTGRKIIVDTYGGAAPHGGGAFSGKDPSKVDRSAAYAGRYVAKNIVAAGLASRCLVQVSYAIGVAKPTSVMVETYGTGKVSNEILTQLVLDHFDLRPKGIVKMLDLLRPIYAKTAAYGHFGRDEPEFTWEATDKAALLRAAAGL</sequence>
<comment type="function">
    <text evidence="1">Catalyzes the formation of S-adenosylmethionine (AdoMet) from methionine and ATP. The overall synthetic reaction is composed of two sequential steps, AdoMet formation and the subsequent tripolyphosphate hydrolysis which occurs prior to release of AdoMet from the enzyme.</text>
</comment>
<comment type="catalytic activity">
    <reaction evidence="1">
        <text>L-methionine + ATP + H2O = S-adenosyl-L-methionine + phosphate + diphosphate</text>
        <dbReference type="Rhea" id="RHEA:21080"/>
        <dbReference type="ChEBI" id="CHEBI:15377"/>
        <dbReference type="ChEBI" id="CHEBI:30616"/>
        <dbReference type="ChEBI" id="CHEBI:33019"/>
        <dbReference type="ChEBI" id="CHEBI:43474"/>
        <dbReference type="ChEBI" id="CHEBI:57844"/>
        <dbReference type="ChEBI" id="CHEBI:59789"/>
        <dbReference type="EC" id="2.5.1.6"/>
    </reaction>
</comment>
<comment type="cofactor">
    <cofactor evidence="1">
        <name>Mg(2+)</name>
        <dbReference type="ChEBI" id="CHEBI:18420"/>
    </cofactor>
    <text evidence="1">Binds 2 divalent ions per subunit.</text>
</comment>
<comment type="cofactor">
    <cofactor evidence="1">
        <name>K(+)</name>
        <dbReference type="ChEBI" id="CHEBI:29103"/>
    </cofactor>
    <text evidence="1">Binds 1 potassium ion per subunit.</text>
</comment>
<comment type="pathway">
    <text evidence="1">Amino-acid biosynthesis; S-adenosyl-L-methionine biosynthesis; S-adenosyl-L-methionine from L-methionine: step 1/1.</text>
</comment>
<comment type="subunit">
    <text evidence="1">Homotetramer; dimer of dimers.</text>
</comment>
<comment type="subcellular location">
    <subcellularLocation>
        <location evidence="1">Cytoplasm</location>
    </subcellularLocation>
</comment>
<comment type="similarity">
    <text evidence="1">Belongs to the AdoMet synthase family.</text>
</comment>
<organism>
    <name type="scientific">Methylobacillus flagellatus (strain ATCC 51484 / DSM 6875 / VKM B-1610 / KT)</name>
    <dbReference type="NCBI Taxonomy" id="265072"/>
    <lineage>
        <taxon>Bacteria</taxon>
        <taxon>Pseudomonadati</taxon>
        <taxon>Pseudomonadota</taxon>
        <taxon>Betaproteobacteria</taxon>
        <taxon>Nitrosomonadales</taxon>
        <taxon>Methylophilaceae</taxon>
        <taxon>Methylobacillus</taxon>
    </lineage>
</organism>
<evidence type="ECO:0000255" key="1">
    <source>
        <dbReference type="HAMAP-Rule" id="MF_00086"/>
    </source>
</evidence>
<name>METK_METFK</name>
<dbReference type="EC" id="2.5.1.6" evidence="1"/>
<dbReference type="EMBL" id="CP000284">
    <property type="protein sequence ID" value="ABE48465.1"/>
    <property type="molecule type" value="Genomic_DNA"/>
</dbReference>
<dbReference type="RefSeq" id="WP_011478562.1">
    <property type="nucleotide sequence ID" value="NC_007947.1"/>
</dbReference>
<dbReference type="SMR" id="Q1H4X2"/>
<dbReference type="STRING" id="265072.Mfla_0194"/>
<dbReference type="KEGG" id="mfa:Mfla_0194"/>
<dbReference type="eggNOG" id="COG0192">
    <property type="taxonomic scope" value="Bacteria"/>
</dbReference>
<dbReference type="HOGENOM" id="CLU_041802_1_1_4"/>
<dbReference type="OrthoDB" id="9801686at2"/>
<dbReference type="UniPathway" id="UPA00315">
    <property type="reaction ID" value="UER00080"/>
</dbReference>
<dbReference type="Proteomes" id="UP000002440">
    <property type="component" value="Chromosome"/>
</dbReference>
<dbReference type="GO" id="GO:0005737">
    <property type="term" value="C:cytoplasm"/>
    <property type="evidence" value="ECO:0007669"/>
    <property type="project" value="UniProtKB-SubCell"/>
</dbReference>
<dbReference type="GO" id="GO:0005524">
    <property type="term" value="F:ATP binding"/>
    <property type="evidence" value="ECO:0007669"/>
    <property type="project" value="UniProtKB-UniRule"/>
</dbReference>
<dbReference type="GO" id="GO:0000287">
    <property type="term" value="F:magnesium ion binding"/>
    <property type="evidence" value="ECO:0007669"/>
    <property type="project" value="UniProtKB-UniRule"/>
</dbReference>
<dbReference type="GO" id="GO:0004478">
    <property type="term" value="F:methionine adenosyltransferase activity"/>
    <property type="evidence" value="ECO:0007669"/>
    <property type="project" value="UniProtKB-UniRule"/>
</dbReference>
<dbReference type="GO" id="GO:0006730">
    <property type="term" value="P:one-carbon metabolic process"/>
    <property type="evidence" value="ECO:0007669"/>
    <property type="project" value="UniProtKB-KW"/>
</dbReference>
<dbReference type="GO" id="GO:0006556">
    <property type="term" value="P:S-adenosylmethionine biosynthetic process"/>
    <property type="evidence" value="ECO:0007669"/>
    <property type="project" value="UniProtKB-UniRule"/>
</dbReference>
<dbReference type="CDD" id="cd18079">
    <property type="entry name" value="S-AdoMet_synt"/>
    <property type="match status" value="1"/>
</dbReference>
<dbReference type="FunFam" id="3.30.300.10:FF:000003">
    <property type="entry name" value="S-adenosylmethionine synthase"/>
    <property type="match status" value="1"/>
</dbReference>
<dbReference type="FunFam" id="3.30.300.10:FF:000004">
    <property type="entry name" value="S-adenosylmethionine synthase"/>
    <property type="match status" value="1"/>
</dbReference>
<dbReference type="Gene3D" id="3.30.300.10">
    <property type="match status" value="3"/>
</dbReference>
<dbReference type="HAMAP" id="MF_00086">
    <property type="entry name" value="S_AdoMet_synth1"/>
    <property type="match status" value="1"/>
</dbReference>
<dbReference type="InterPro" id="IPR022631">
    <property type="entry name" value="ADOMET_SYNTHASE_CS"/>
</dbReference>
<dbReference type="InterPro" id="IPR022630">
    <property type="entry name" value="S-AdoMet_synt_C"/>
</dbReference>
<dbReference type="InterPro" id="IPR022629">
    <property type="entry name" value="S-AdoMet_synt_central"/>
</dbReference>
<dbReference type="InterPro" id="IPR022628">
    <property type="entry name" value="S-AdoMet_synt_N"/>
</dbReference>
<dbReference type="InterPro" id="IPR002133">
    <property type="entry name" value="S-AdoMet_synthetase"/>
</dbReference>
<dbReference type="InterPro" id="IPR022636">
    <property type="entry name" value="S-AdoMet_synthetase_sfam"/>
</dbReference>
<dbReference type="NCBIfam" id="TIGR01034">
    <property type="entry name" value="metK"/>
    <property type="match status" value="1"/>
</dbReference>
<dbReference type="PANTHER" id="PTHR11964">
    <property type="entry name" value="S-ADENOSYLMETHIONINE SYNTHETASE"/>
    <property type="match status" value="1"/>
</dbReference>
<dbReference type="Pfam" id="PF02773">
    <property type="entry name" value="S-AdoMet_synt_C"/>
    <property type="match status" value="1"/>
</dbReference>
<dbReference type="Pfam" id="PF02772">
    <property type="entry name" value="S-AdoMet_synt_M"/>
    <property type="match status" value="1"/>
</dbReference>
<dbReference type="Pfam" id="PF00438">
    <property type="entry name" value="S-AdoMet_synt_N"/>
    <property type="match status" value="1"/>
</dbReference>
<dbReference type="PIRSF" id="PIRSF000497">
    <property type="entry name" value="MAT"/>
    <property type="match status" value="1"/>
</dbReference>
<dbReference type="SUPFAM" id="SSF55973">
    <property type="entry name" value="S-adenosylmethionine synthetase"/>
    <property type="match status" value="3"/>
</dbReference>
<dbReference type="PROSITE" id="PS00376">
    <property type="entry name" value="ADOMET_SYNTHASE_1"/>
    <property type="match status" value="1"/>
</dbReference>
<dbReference type="PROSITE" id="PS00377">
    <property type="entry name" value="ADOMET_SYNTHASE_2"/>
    <property type="match status" value="1"/>
</dbReference>
<keyword id="KW-0067">ATP-binding</keyword>
<keyword id="KW-0963">Cytoplasm</keyword>
<keyword id="KW-0460">Magnesium</keyword>
<keyword id="KW-0479">Metal-binding</keyword>
<keyword id="KW-0547">Nucleotide-binding</keyword>
<keyword id="KW-0554">One-carbon metabolism</keyword>
<keyword id="KW-0630">Potassium</keyword>
<keyword id="KW-1185">Reference proteome</keyword>
<keyword id="KW-0808">Transferase</keyword>
<feature type="chain" id="PRO_0000302938" description="S-adenosylmethionine synthase">
    <location>
        <begin position="1"/>
        <end position="387"/>
    </location>
</feature>
<feature type="region of interest" description="Flexible loop" evidence="1">
    <location>
        <begin position="99"/>
        <end position="109"/>
    </location>
</feature>
<feature type="binding site" description="in other chain" evidence="1">
    <location>
        <position position="15"/>
    </location>
    <ligand>
        <name>ATP</name>
        <dbReference type="ChEBI" id="CHEBI:30616"/>
        <note>ligand shared between two neighboring subunits</note>
    </ligand>
</feature>
<feature type="binding site" evidence="1">
    <location>
        <position position="17"/>
    </location>
    <ligand>
        <name>Mg(2+)</name>
        <dbReference type="ChEBI" id="CHEBI:18420"/>
    </ligand>
</feature>
<feature type="binding site" evidence="1">
    <location>
        <position position="43"/>
    </location>
    <ligand>
        <name>K(+)</name>
        <dbReference type="ChEBI" id="CHEBI:29103"/>
    </ligand>
</feature>
<feature type="binding site" description="in other chain" evidence="1">
    <location>
        <position position="56"/>
    </location>
    <ligand>
        <name>L-methionine</name>
        <dbReference type="ChEBI" id="CHEBI:57844"/>
        <note>ligand shared between two neighboring subunits</note>
    </ligand>
</feature>
<feature type="binding site" description="in other chain" evidence="1">
    <location>
        <position position="99"/>
    </location>
    <ligand>
        <name>L-methionine</name>
        <dbReference type="ChEBI" id="CHEBI:57844"/>
        <note>ligand shared between two neighboring subunits</note>
    </ligand>
</feature>
<feature type="binding site" description="in other chain" evidence="1">
    <location>
        <begin position="166"/>
        <end position="168"/>
    </location>
    <ligand>
        <name>ATP</name>
        <dbReference type="ChEBI" id="CHEBI:30616"/>
        <note>ligand shared between two neighboring subunits</note>
    </ligand>
</feature>
<feature type="binding site" description="in other chain" evidence="1">
    <location>
        <begin position="232"/>
        <end position="233"/>
    </location>
    <ligand>
        <name>ATP</name>
        <dbReference type="ChEBI" id="CHEBI:30616"/>
        <note>ligand shared between two neighboring subunits</note>
    </ligand>
</feature>
<feature type="binding site" evidence="1">
    <location>
        <position position="241"/>
    </location>
    <ligand>
        <name>ATP</name>
        <dbReference type="ChEBI" id="CHEBI:30616"/>
        <note>ligand shared between two neighboring subunits</note>
    </ligand>
</feature>
<feature type="binding site" evidence="1">
    <location>
        <position position="241"/>
    </location>
    <ligand>
        <name>L-methionine</name>
        <dbReference type="ChEBI" id="CHEBI:57844"/>
        <note>ligand shared between two neighboring subunits</note>
    </ligand>
</feature>
<feature type="binding site" description="in other chain" evidence="1">
    <location>
        <begin position="247"/>
        <end position="248"/>
    </location>
    <ligand>
        <name>ATP</name>
        <dbReference type="ChEBI" id="CHEBI:30616"/>
        <note>ligand shared between two neighboring subunits</note>
    </ligand>
</feature>
<feature type="binding site" evidence="1">
    <location>
        <position position="264"/>
    </location>
    <ligand>
        <name>ATP</name>
        <dbReference type="ChEBI" id="CHEBI:30616"/>
        <note>ligand shared between two neighboring subunits</note>
    </ligand>
</feature>
<feature type="binding site" evidence="1">
    <location>
        <position position="268"/>
    </location>
    <ligand>
        <name>ATP</name>
        <dbReference type="ChEBI" id="CHEBI:30616"/>
        <note>ligand shared between two neighboring subunits</note>
    </ligand>
</feature>
<feature type="binding site" description="in other chain" evidence="1">
    <location>
        <position position="272"/>
    </location>
    <ligand>
        <name>L-methionine</name>
        <dbReference type="ChEBI" id="CHEBI:57844"/>
        <note>ligand shared between two neighboring subunits</note>
    </ligand>
</feature>
<gene>
    <name evidence="1" type="primary">metK</name>
    <name type="ordered locus">Mfla_0194</name>
</gene>
<reference key="1">
    <citation type="submission" date="2006-03" db="EMBL/GenBank/DDBJ databases">
        <title>Complete sequence of Methylobacillus flagellatus KT.</title>
        <authorList>
            <consortium name="US DOE Joint Genome Institute"/>
            <person name="Copeland A."/>
            <person name="Lucas S."/>
            <person name="Lapidus A."/>
            <person name="Barry K."/>
            <person name="Detter J.C."/>
            <person name="Glavina del Rio T."/>
            <person name="Hammon N."/>
            <person name="Israni S."/>
            <person name="Dalin E."/>
            <person name="Tice H."/>
            <person name="Pitluck S."/>
            <person name="Brettin T."/>
            <person name="Bruce D."/>
            <person name="Han C."/>
            <person name="Tapia R."/>
            <person name="Saunders E."/>
            <person name="Gilna P."/>
            <person name="Schmutz J."/>
            <person name="Larimer F."/>
            <person name="Land M."/>
            <person name="Kyrpides N."/>
            <person name="Anderson I."/>
            <person name="Richardson P."/>
        </authorList>
    </citation>
    <scope>NUCLEOTIDE SEQUENCE [LARGE SCALE GENOMIC DNA]</scope>
    <source>
        <strain>ATCC 51484 / DSM 6875 / VKM B-1610 / KT</strain>
    </source>
</reference>
<proteinExistence type="inferred from homology"/>
<accession>Q1H4X2</accession>
<protein>
    <recommendedName>
        <fullName evidence="1">S-adenosylmethionine synthase</fullName>
        <shortName evidence="1">AdoMet synthase</shortName>
        <ecNumber evidence="1">2.5.1.6</ecNumber>
    </recommendedName>
    <alternativeName>
        <fullName evidence="1">MAT</fullName>
    </alternativeName>
    <alternativeName>
        <fullName evidence="1">Methionine adenosyltransferase</fullName>
    </alternativeName>
</protein>